<dbReference type="EC" id="3.2.1.24" evidence="12 13"/>
<dbReference type="EMBL" id="U00030">
    <property type="protein sequence ID" value="AAB68370.1"/>
    <property type="molecule type" value="Genomic_DNA"/>
</dbReference>
<dbReference type="EMBL" id="BK006934">
    <property type="protein sequence ID" value="DAA06897.1"/>
    <property type="molecule type" value="Genomic_DNA"/>
</dbReference>
<dbReference type="PIR" id="S46693">
    <property type="entry name" value="S46693"/>
</dbReference>
<dbReference type="RefSeq" id="NP_012074.3">
    <property type="nucleotide sequence ID" value="NM_001179335.3"/>
</dbReference>
<dbReference type="PDB" id="8ZPW">
    <property type="method" value="EM"/>
    <property type="resolution" value="3.00 A"/>
    <property type="chains" value="A=1-796"/>
</dbReference>
<dbReference type="PDBsum" id="8ZPW"/>
<dbReference type="EMDB" id="EMD-60365"/>
<dbReference type="SMR" id="P38888"/>
<dbReference type="BioGRID" id="36638">
    <property type="interactions" value="42"/>
</dbReference>
<dbReference type="ComplexPortal" id="CPX-1283">
    <property type="entry name" value="HTM1-PDI1 exomannosidase complex"/>
</dbReference>
<dbReference type="DIP" id="DIP-1890N"/>
<dbReference type="FunCoup" id="P38888">
    <property type="interactions" value="628"/>
</dbReference>
<dbReference type="IntAct" id="P38888">
    <property type="interactions" value="3"/>
</dbReference>
<dbReference type="MINT" id="P38888"/>
<dbReference type="STRING" id="4932.YHR204W"/>
<dbReference type="CAZy" id="GH47">
    <property type="family name" value="Glycoside Hydrolase Family 47"/>
</dbReference>
<dbReference type="GlyCosmos" id="P38888">
    <property type="glycosylation" value="4 sites, No reported glycans"/>
</dbReference>
<dbReference type="GlyGen" id="P38888">
    <property type="glycosylation" value="4 sites"/>
</dbReference>
<dbReference type="PaxDb" id="4932-YHR204W"/>
<dbReference type="PeptideAtlas" id="P38888"/>
<dbReference type="EnsemblFungi" id="YHR204W_mRNA">
    <property type="protein sequence ID" value="YHR204W"/>
    <property type="gene ID" value="YHR204W"/>
</dbReference>
<dbReference type="GeneID" id="856611"/>
<dbReference type="KEGG" id="sce:YHR204W"/>
<dbReference type="AGR" id="SGD:S000001247"/>
<dbReference type="SGD" id="S000001247">
    <property type="gene designation" value="MNL1"/>
</dbReference>
<dbReference type="VEuPathDB" id="FungiDB:YHR204W"/>
<dbReference type="eggNOG" id="KOG2429">
    <property type="taxonomic scope" value="Eukaryota"/>
</dbReference>
<dbReference type="GeneTree" id="ENSGT00940000157717"/>
<dbReference type="HOGENOM" id="CLU_003818_5_3_1"/>
<dbReference type="InParanoid" id="P38888"/>
<dbReference type="OMA" id="EAHPMWL"/>
<dbReference type="OrthoDB" id="8118055at2759"/>
<dbReference type="BioCyc" id="MetaCyc:YHR204W-MONOMER"/>
<dbReference type="BioCyc" id="YEAST:YHR204W-MONOMER"/>
<dbReference type="UniPathway" id="UPA00378"/>
<dbReference type="BioGRID-ORCS" id="856611">
    <property type="hits" value="0 hits in 10 CRISPR screens"/>
</dbReference>
<dbReference type="PRO" id="PR:P38888"/>
<dbReference type="Proteomes" id="UP000002311">
    <property type="component" value="Chromosome VIII"/>
</dbReference>
<dbReference type="RNAct" id="P38888">
    <property type="molecule type" value="protein"/>
</dbReference>
<dbReference type="GO" id="GO:0005783">
    <property type="term" value="C:endoplasmic reticulum"/>
    <property type="evidence" value="ECO:0007005"/>
    <property type="project" value="SGD"/>
</dbReference>
<dbReference type="GO" id="GO:0005788">
    <property type="term" value="C:endoplasmic reticulum lumen"/>
    <property type="evidence" value="ECO:0000314"/>
    <property type="project" value="SGD"/>
</dbReference>
<dbReference type="GO" id="GO:0044322">
    <property type="term" value="C:endoplasmic reticulum quality control compartment"/>
    <property type="evidence" value="ECO:0007669"/>
    <property type="project" value="GOC"/>
</dbReference>
<dbReference type="GO" id="GO:0106055">
    <property type="term" value="C:mannosyl-oligosaccharide 1,2-alpha-mannosidase complex"/>
    <property type="evidence" value="ECO:0000353"/>
    <property type="project" value="ComplexPortal"/>
</dbReference>
<dbReference type="GO" id="GO:0016020">
    <property type="term" value="C:membrane"/>
    <property type="evidence" value="ECO:0007669"/>
    <property type="project" value="InterPro"/>
</dbReference>
<dbReference type="GO" id="GO:0005509">
    <property type="term" value="F:calcium ion binding"/>
    <property type="evidence" value="ECO:0007669"/>
    <property type="project" value="InterPro"/>
</dbReference>
<dbReference type="GO" id="GO:0030246">
    <property type="term" value="F:carbohydrate binding"/>
    <property type="evidence" value="ECO:0000315"/>
    <property type="project" value="SGD"/>
</dbReference>
<dbReference type="GO" id="GO:0004571">
    <property type="term" value="F:mannosyl-oligosaccharide 1,2-alpha-mannosidase activity"/>
    <property type="evidence" value="ECO:0000314"/>
    <property type="project" value="SGD"/>
</dbReference>
<dbReference type="GO" id="GO:0005975">
    <property type="term" value="P:carbohydrate metabolic process"/>
    <property type="evidence" value="ECO:0007669"/>
    <property type="project" value="InterPro"/>
</dbReference>
<dbReference type="GO" id="GO:1904380">
    <property type="term" value="P:endoplasmic reticulum mannose trimming"/>
    <property type="evidence" value="ECO:0000315"/>
    <property type="project" value="SGD"/>
</dbReference>
<dbReference type="GO" id="GO:1900103">
    <property type="term" value="P:positive regulation of endoplasmic reticulum unfolded protein response"/>
    <property type="evidence" value="ECO:0000314"/>
    <property type="project" value="ComplexPortal"/>
</dbReference>
<dbReference type="GO" id="GO:0006486">
    <property type="term" value="P:protein glycosylation"/>
    <property type="evidence" value="ECO:0007669"/>
    <property type="project" value="UniProtKB-UniPathway"/>
</dbReference>
<dbReference type="GO" id="GO:0006986">
    <property type="term" value="P:response to unfolded protein"/>
    <property type="evidence" value="ECO:0007669"/>
    <property type="project" value="UniProtKB-KW"/>
</dbReference>
<dbReference type="GO" id="GO:0097466">
    <property type="term" value="P:ubiquitin-dependent glycoprotein ERAD pathway"/>
    <property type="evidence" value="ECO:0000315"/>
    <property type="project" value="SGD"/>
</dbReference>
<dbReference type="Gene3D" id="1.50.10.10">
    <property type="match status" value="1"/>
</dbReference>
<dbReference type="InterPro" id="IPR012341">
    <property type="entry name" value="6hp_glycosidase-like_sf"/>
</dbReference>
<dbReference type="InterPro" id="IPR044674">
    <property type="entry name" value="EDEM1/2/3"/>
</dbReference>
<dbReference type="InterPro" id="IPR001382">
    <property type="entry name" value="Glyco_hydro_47"/>
</dbReference>
<dbReference type="InterPro" id="IPR036026">
    <property type="entry name" value="Seven-hairpin_glycosidases"/>
</dbReference>
<dbReference type="PANTHER" id="PTHR45679:SF5">
    <property type="entry name" value="ER DEGRADATION-ENHANCING ALPHA-MANNOSIDASE-LIKE PROTEIN 1"/>
    <property type="match status" value="1"/>
</dbReference>
<dbReference type="PANTHER" id="PTHR45679">
    <property type="entry name" value="ER DEGRADATION-ENHANCING ALPHA-MANNOSIDASE-LIKE PROTEIN 2"/>
    <property type="match status" value="1"/>
</dbReference>
<dbReference type="Pfam" id="PF01532">
    <property type="entry name" value="Glyco_hydro_47"/>
    <property type="match status" value="1"/>
</dbReference>
<dbReference type="PRINTS" id="PR00747">
    <property type="entry name" value="GLYHDRLASE47"/>
</dbReference>
<dbReference type="SUPFAM" id="SSF48225">
    <property type="entry name" value="Seven-hairpin glycosidases"/>
    <property type="match status" value="1"/>
</dbReference>
<feature type="signal peptide" evidence="4">
    <location>
        <begin position="1"/>
        <end position="20"/>
    </location>
</feature>
<feature type="chain" id="PRO_0000210324" description="ER degradation-enhancing alpha-mannosidase-like protein 1">
    <location>
        <begin position="21"/>
        <end position="796"/>
    </location>
</feature>
<feature type="active site" description="Proton donor" evidence="1">
    <location>
        <position position="372"/>
    </location>
</feature>
<feature type="binding site" evidence="2">
    <location>
        <position position="495"/>
    </location>
    <ligand>
        <name>Ca(2+)</name>
        <dbReference type="ChEBI" id="CHEBI:29108"/>
    </ligand>
</feature>
<feature type="glycosylation site" description="N-linked (GlcNAc...) asparagine" evidence="4">
    <location>
        <position position="86"/>
    </location>
</feature>
<feature type="glycosylation site" description="N-linked (GlcNAc...) asparagine" evidence="4">
    <location>
        <position position="517"/>
    </location>
</feature>
<feature type="glycosylation site" description="N-linked (GlcNAc...) asparagine" evidence="4">
    <location>
        <position position="672"/>
    </location>
</feature>
<feature type="glycosylation site" description="N-linked (GlcNAc...) asparagine" evidence="4">
    <location>
        <position position="762"/>
    </location>
</feature>
<feature type="helix" evidence="15">
    <location>
        <begin position="29"/>
        <end position="52"/>
    </location>
</feature>
<feature type="turn" evidence="15">
    <location>
        <begin position="53"/>
        <end position="56"/>
    </location>
</feature>
<feature type="strand" evidence="15">
    <location>
        <begin position="57"/>
        <end position="61"/>
    </location>
</feature>
<feature type="turn" evidence="15">
    <location>
        <begin position="62"/>
        <end position="65"/>
    </location>
</feature>
<feature type="strand" evidence="15">
    <location>
        <begin position="66"/>
        <end position="68"/>
    </location>
</feature>
<feature type="helix" evidence="15">
    <location>
        <begin position="78"/>
        <end position="81"/>
    </location>
</feature>
<feature type="helix" evidence="15">
    <location>
        <begin position="89"/>
        <end position="100"/>
    </location>
</feature>
<feature type="helix" evidence="15">
    <location>
        <begin position="104"/>
        <end position="117"/>
    </location>
</feature>
<feature type="strand" evidence="15">
    <location>
        <begin position="128"/>
        <end position="130"/>
    </location>
</feature>
<feature type="helix" evidence="15">
    <location>
        <begin position="131"/>
        <end position="149"/>
    </location>
</feature>
<feature type="helix" evidence="15">
    <location>
        <begin position="159"/>
        <end position="161"/>
    </location>
</feature>
<feature type="helix" evidence="15">
    <location>
        <begin position="165"/>
        <end position="177"/>
    </location>
</feature>
<feature type="helix" evidence="15">
    <location>
        <begin position="178"/>
        <end position="181"/>
    </location>
</feature>
<feature type="strand" evidence="15">
    <location>
        <begin position="183"/>
        <end position="186"/>
    </location>
</feature>
<feature type="strand" evidence="15">
    <location>
        <begin position="190"/>
        <end position="194"/>
    </location>
</feature>
<feature type="helix" evidence="15">
    <location>
        <begin position="213"/>
        <end position="217"/>
    </location>
</feature>
<feature type="helix" evidence="15">
    <location>
        <begin position="220"/>
        <end position="230"/>
    </location>
</feature>
<feature type="helix" evidence="15">
    <location>
        <begin position="234"/>
        <end position="248"/>
    </location>
</feature>
<feature type="strand" evidence="15">
    <location>
        <begin position="258"/>
        <end position="260"/>
    </location>
</feature>
<feature type="turn" evidence="15">
    <location>
        <begin position="262"/>
        <end position="264"/>
    </location>
</feature>
<feature type="strand" evidence="15">
    <location>
        <begin position="271"/>
        <end position="275"/>
    </location>
</feature>
<feature type="turn" evidence="15">
    <location>
        <begin position="276"/>
        <end position="278"/>
    </location>
</feature>
<feature type="helix" evidence="15">
    <location>
        <begin position="279"/>
        <end position="291"/>
    </location>
</feature>
<feature type="helix" evidence="15">
    <location>
        <begin position="295"/>
        <end position="310"/>
    </location>
</feature>
<feature type="strand" evidence="15">
    <location>
        <begin position="315"/>
        <end position="318"/>
    </location>
</feature>
<feature type="turn" evidence="15">
    <location>
        <begin position="323"/>
        <end position="325"/>
    </location>
</feature>
<feature type="strand" evidence="15">
    <location>
        <begin position="331"/>
        <end position="334"/>
    </location>
</feature>
<feature type="helix" evidence="15">
    <location>
        <begin position="335"/>
        <end position="339"/>
    </location>
</feature>
<feature type="helix" evidence="15">
    <location>
        <begin position="340"/>
        <end position="347"/>
    </location>
</feature>
<feature type="helix" evidence="15">
    <location>
        <begin position="350"/>
        <end position="367"/>
    </location>
</feature>
<feature type="strand" evidence="15">
    <location>
        <begin position="372"/>
        <end position="376"/>
    </location>
</feature>
<feature type="helix" evidence="15">
    <location>
        <begin position="409"/>
        <end position="421"/>
    </location>
</feature>
<feature type="helix" evidence="15">
    <location>
        <begin position="424"/>
        <end position="440"/>
    </location>
</feature>
<feature type="strand" evidence="15">
    <location>
        <begin position="444"/>
        <end position="447"/>
    </location>
</feature>
<feature type="strand" evidence="15">
    <location>
        <begin position="450"/>
        <end position="452"/>
    </location>
</feature>
<feature type="turn" evidence="15">
    <location>
        <begin position="453"/>
        <end position="456"/>
    </location>
</feature>
<feature type="helix" evidence="15">
    <location>
        <begin position="464"/>
        <end position="478"/>
    </location>
</feature>
<feature type="helix" evidence="15">
    <location>
        <begin position="483"/>
        <end position="486"/>
    </location>
</feature>
<feature type="helix" evidence="15">
    <location>
        <begin position="504"/>
        <end position="512"/>
    </location>
</feature>
<feature type="strand" evidence="15">
    <location>
        <begin position="591"/>
        <end position="593"/>
    </location>
</feature>
<feature type="helix" evidence="15">
    <location>
        <begin position="595"/>
        <end position="599"/>
    </location>
</feature>
<feature type="helix" evidence="15">
    <location>
        <begin position="601"/>
        <end position="604"/>
    </location>
</feature>
<feature type="helix" evidence="15">
    <location>
        <begin position="605"/>
        <end position="609"/>
    </location>
</feature>
<feature type="turn" evidence="15">
    <location>
        <begin position="610"/>
        <end position="613"/>
    </location>
</feature>
<feature type="helix" evidence="15">
    <location>
        <begin position="618"/>
        <end position="620"/>
    </location>
</feature>
<feature type="helix" evidence="15">
    <location>
        <begin position="626"/>
        <end position="628"/>
    </location>
</feature>
<feature type="helix" evidence="15">
    <location>
        <begin position="630"/>
        <end position="633"/>
    </location>
</feature>
<feature type="turn" evidence="15">
    <location>
        <begin position="639"/>
        <end position="641"/>
    </location>
</feature>
<feature type="strand" evidence="15">
    <location>
        <begin position="652"/>
        <end position="663"/>
    </location>
</feature>
<feature type="strand" evidence="15">
    <location>
        <begin position="674"/>
        <end position="678"/>
    </location>
</feature>
<feature type="strand" evidence="15">
    <location>
        <begin position="680"/>
        <end position="694"/>
    </location>
</feature>
<feature type="helix" evidence="15">
    <location>
        <begin position="705"/>
        <end position="707"/>
    </location>
</feature>
<feature type="helix" evidence="15">
    <location>
        <begin position="720"/>
        <end position="725"/>
    </location>
</feature>
<feature type="strand" evidence="15">
    <location>
        <begin position="732"/>
        <end position="739"/>
    </location>
</feature>
<feature type="strand" evidence="15">
    <location>
        <begin position="749"/>
        <end position="753"/>
    </location>
</feature>
<feature type="strand" evidence="15">
    <location>
        <begin position="775"/>
        <end position="777"/>
    </location>
</feature>
<feature type="strand" evidence="15">
    <location>
        <begin position="783"/>
        <end position="785"/>
    </location>
</feature>
<feature type="strand" evidence="15">
    <location>
        <begin position="788"/>
        <end position="796"/>
    </location>
</feature>
<organism>
    <name type="scientific">Saccharomyces cerevisiae (strain ATCC 204508 / S288c)</name>
    <name type="common">Baker's yeast</name>
    <dbReference type="NCBI Taxonomy" id="559292"/>
    <lineage>
        <taxon>Eukaryota</taxon>
        <taxon>Fungi</taxon>
        <taxon>Dikarya</taxon>
        <taxon>Ascomycota</taxon>
        <taxon>Saccharomycotina</taxon>
        <taxon>Saccharomycetes</taxon>
        <taxon>Saccharomycetales</taxon>
        <taxon>Saccharomycetaceae</taxon>
        <taxon>Saccharomyces</taxon>
    </lineage>
</organism>
<name>MNL1_YEAST</name>
<keyword id="KW-0002">3D-structure</keyword>
<keyword id="KW-0256">Endoplasmic reticulum</keyword>
<keyword id="KW-0325">Glycoprotein</keyword>
<keyword id="KW-0326">Glycosidase</keyword>
<keyword id="KW-0378">Hydrolase</keyword>
<keyword id="KW-0479">Metal-binding</keyword>
<keyword id="KW-1185">Reference proteome</keyword>
<keyword id="KW-0732">Signal</keyword>
<keyword id="KW-0834">Unfolded protein response</keyword>
<reference key="1">
    <citation type="journal article" date="1994" name="Science">
        <title>Complete nucleotide sequence of Saccharomyces cerevisiae chromosome VIII.</title>
        <authorList>
            <person name="Johnston M."/>
            <person name="Andrews S."/>
            <person name="Brinkman R."/>
            <person name="Cooper J."/>
            <person name="Ding H."/>
            <person name="Dover J."/>
            <person name="Du Z."/>
            <person name="Favello A."/>
            <person name="Fulton L."/>
            <person name="Gattung S."/>
            <person name="Geisel C."/>
            <person name="Kirsten J."/>
            <person name="Kucaba T."/>
            <person name="Hillier L.W."/>
            <person name="Jier M."/>
            <person name="Johnston L."/>
            <person name="Langston Y."/>
            <person name="Latreille P."/>
            <person name="Louis E.J."/>
            <person name="Macri C."/>
            <person name="Mardis E."/>
            <person name="Menezes S."/>
            <person name="Mouser L."/>
            <person name="Nhan M."/>
            <person name="Rifkin L."/>
            <person name="Riles L."/>
            <person name="St Peter H."/>
            <person name="Trevaskis E."/>
            <person name="Vaughan K."/>
            <person name="Vignati D."/>
            <person name="Wilcox L."/>
            <person name="Wohldman P."/>
            <person name="Waterston R."/>
            <person name="Wilson R."/>
            <person name="Vaudin M."/>
        </authorList>
    </citation>
    <scope>NUCLEOTIDE SEQUENCE [LARGE SCALE GENOMIC DNA]</scope>
    <source>
        <strain>ATCC 204508 / S288c</strain>
    </source>
</reference>
<reference key="2">
    <citation type="journal article" date="2014" name="G3 (Bethesda)">
        <title>The reference genome sequence of Saccharomyces cerevisiae: Then and now.</title>
        <authorList>
            <person name="Engel S.R."/>
            <person name="Dietrich F.S."/>
            <person name="Fisk D.G."/>
            <person name="Binkley G."/>
            <person name="Balakrishnan R."/>
            <person name="Costanzo M.C."/>
            <person name="Dwight S.S."/>
            <person name="Hitz B.C."/>
            <person name="Karra K."/>
            <person name="Nash R.S."/>
            <person name="Weng S."/>
            <person name="Wong E.D."/>
            <person name="Lloyd P."/>
            <person name="Skrzypek M.S."/>
            <person name="Miyasato S.R."/>
            <person name="Simison M."/>
            <person name="Cherry J.M."/>
        </authorList>
    </citation>
    <scope>GENOME REANNOTATION</scope>
    <source>
        <strain>ATCC 204508 / S288c</strain>
    </source>
</reference>
<reference key="3">
    <citation type="journal article" date="2001" name="EMBO Rep.">
        <title>Htm1p, a mannosidase-like protein, is involved in glycoprotein degradation in yeast.</title>
        <authorList>
            <person name="Jakob C.A."/>
            <person name="Bodmer D."/>
            <person name="Spirig U."/>
            <person name="Baettig P."/>
            <person name="Marcil A."/>
            <person name="Dignard D."/>
            <person name="Bergeron J.J.M."/>
            <person name="Thomas D.Y."/>
            <person name="Aebi M."/>
        </authorList>
    </citation>
    <scope>FUNCTION</scope>
</reference>
<reference key="4">
    <citation type="journal article" date="2001" name="J. Biol. Chem.">
        <title>Mnl1p, an alpha -mannosidase-like protein in yeast Saccharomyces cerevisiae, is required for endoplasmic reticulum-associated degradation of glycoproteins.</title>
        <authorList>
            <person name="Nakatsukasa K."/>
            <person name="Nishikawa S."/>
            <person name="Hosokawa N."/>
            <person name="Nagata K."/>
            <person name="Endo T."/>
        </authorList>
    </citation>
    <scope>FUNCTION</scope>
    <scope>SUBCELLULAR LOCATION</scope>
</reference>
<reference key="5">
    <citation type="journal article" date="2004" name="J. Cell Biol.">
        <title>Misfolded proteins are sorted by a sequential checkpoint mechanism of ER quality control.</title>
        <authorList>
            <person name="Vashist S."/>
            <person name="Ng D.T.W."/>
        </authorList>
    </citation>
    <scope>FUNCTION</scope>
</reference>
<reference key="6">
    <citation type="journal article" date="2004" name="Mol. Biol. Cell">
        <title>Cystic fibrosis transmembrane conductance regulator degradation depends on the lectins Htm1p/EDEM and the Cdc48 protein complex in yeast.</title>
        <authorList>
            <person name="Gnann A."/>
            <person name="Riordan J.R."/>
            <person name="Wolf D.H."/>
        </authorList>
    </citation>
    <scope>FUNCTION</scope>
</reference>
<reference key="7">
    <citation type="journal article" date="2005" name="J. Cell Biol.">
        <title>Single, context-specific glycans can target misfolded glycoproteins for ER-associated degradation.</title>
        <authorList>
            <person name="Spear E.D."/>
            <person name="Ng D.T.W."/>
        </authorList>
    </citation>
    <scope>FUNCTION</scope>
</reference>
<reference key="8">
    <citation type="journal article" date="2003" name="Nature">
        <title>Global analysis of protein localization in budding yeast.</title>
        <authorList>
            <person name="Huh W.-K."/>
            <person name="Falvo J.V."/>
            <person name="Gerke L.C."/>
            <person name="Carroll A.S."/>
            <person name="Howson R.W."/>
            <person name="Weissman J.S."/>
            <person name="O'Shea E.K."/>
        </authorList>
    </citation>
    <scope>SUBCELLULAR LOCATION [LARGE SCALE ANALYSIS]</scope>
</reference>
<reference key="9">
    <citation type="journal article" date="2003" name="Nature">
        <title>Global analysis of protein expression in yeast.</title>
        <authorList>
            <person name="Ghaemmaghami S."/>
            <person name="Huh W.-K."/>
            <person name="Bower K."/>
            <person name="Howson R.W."/>
            <person name="Belle A."/>
            <person name="Dephoure N."/>
            <person name="O'Shea E.K."/>
            <person name="Weissman J.S."/>
        </authorList>
    </citation>
    <scope>LEVEL OF PROTEIN EXPRESSION [LARGE SCALE ANALYSIS]</scope>
</reference>
<reference key="10">
    <citation type="journal article" date="2009" name="J. Cell Biol.">
        <title>Htm1 protein generates the N-glycan signal for glycoprotein degradation in the endoplasmic reticulum.</title>
        <authorList>
            <person name="Clerc S."/>
            <person name="Hirsch C."/>
            <person name="Oggier D.M."/>
            <person name="Deprez P."/>
            <person name="Jakob C."/>
            <person name="Sommer T."/>
            <person name="Aebi M."/>
        </authorList>
    </citation>
    <scope>FUNCTION</scope>
    <scope>INTERACTION WITH PDI1</scope>
    <scope>CATALYTIC ACTIVITY</scope>
</reference>
<reference key="11">
    <citation type="journal article" date="2011" name="Mol. Cell">
        <title>A complex of Pdi1p and the mannosidase Htm1p initiates clearance of unfolded glycoproteins from the endoplasmic reticulum.</title>
        <authorList>
            <person name="Gauss R."/>
            <person name="Kanehara K."/>
            <person name="Carvalho P."/>
            <person name="Ng D.T."/>
            <person name="Aebi M."/>
        </authorList>
    </citation>
    <scope>FUNCTION</scope>
    <scope>INTERACTION WITH PDI1</scope>
    <scope>CATALYTIC ACTIVITY</scope>
</reference>
<accession>P38888</accession>
<accession>D3DLF3</accession>
<evidence type="ECO:0000250" key="1">
    <source>
        <dbReference type="UniProtKB" id="P31723"/>
    </source>
</evidence>
<evidence type="ECO:0000250" key="2">
    <source>
        <dbReference type="UniProtKB" id="P32906"/>
    </source>
</evidence>
<evidence type="ECO:0000250" key="3">
    <source>
        <dbReference type="UniProtKB" id="P45700"/>
    </source>
</evidence>
<evidence type="ECO:0000255" key="4"/>
<evidence type="ECO:0000269" key="5">
    <source>
    </source>
</evidence>
<evidence type="ECO:0000269" key="6">
    <source>
    </source>
</evidence>
<evidence type="ECO:0000269" key="7">
    <source>
    </source>
</evidence>
<evidence type="ECO:0000269" key="8">
    <source>
    </source>
</evidence>
<evidence type="ECO:0000269" key="9">
    <source>
    </source>
</evidence>
<evidence type="ECO:0000269" key="10">
    <source>
    </source>
</evidence>
<evidence type="ECO:0000269" key="11">
    <source>
    </source>
</evidence>
<evidence type="ECO:0000269" key="12">
    <source>
    </source>
</evidence>
<evidence type="ECO:0000269" key="13">
    <source>
    </source>
</evidence>
<evidence type="ECO:0000305" key="14"/>
<evidence type="ECO:0007829" key="15">
    <source>
        <dbReference type="PDB" id="8ZPW"/>
    </source>
</evidence>
<sequence length="796" mass="91246">MVCCLWVLLALLLHLDHVACEDDAYSFTSKELKAYKQEVKELFYFGFDNYLEHGYPYDEVKPISCVPKKRNFEDPTDQGTNDILGNFTITLIDSLTTIAILEDRPQFLKAVRLVERTFPDGNFDIDSTIQVFEITIRVIGSLLSSHLYATDPTKAVYLGDDYDGSLLRLAQNMADRLLPAYLTSTGLPMPRRNIKRKWDVSEFPEFLETENNVAAMASPMFEFTILSYLTGDPKYEKVTRYAFDKTWSLRTGLDLLPMSFHPEKLTPYTPMTGIGASIDSLFEYALKGAILFDDSELMEVWNVAYEALKTNCKNDWFFANVMADTGHLFVPWIDSLSAFFSGLQVLAGDLDDAIANHLMFLKMWNTFGGIPERWNFSPPEFPPLSPLERSGAVALDNILPLEWYPLRPEFFESTYFLYRATKDPFYLNIGVHLLKDLKQRFKSNCGFAGFQNVITGELQDRMETFVLSETLKYLYLLFDEENELHNSASDVIFSTEAHPMWLPQEVRSNYKRNAKFNNSVYSSHLEICQKKDREQAGENTLSQRIVGFAKSIFHKGPPDEEATDPIIDYTIDTELPGTCSIKPHHVIGDEFWYSPMLSNFDRLFEIDSRFAATLIKPSHMHNYNAIELEPGFYNRWSNPQFSTCLIPPTTEIFELLFDLPGYHQLNPLMLENKTITFETFGGRSRLKIEKLQIYQIDYYGDLITASTFQDVSRKDIFSNACDAVASLYSPTYLYRVVAINGRILPRHGSVQIKKHSPVLTSNGTREEDEFKMDGIGINDHSQLMLECTPIINLFIV</sequence>
<proteinExistence type="evidence at protein level"/>
<comment type="function">
    <text evidence="5 6 9 10 11 12 13">Alpha-1,2-specific exomannosidase involved in endoplasmic reticulum-associated degradation (ERAD). Delivers misfolded glycoproteins to proteasomes. Forms a complex with PDI1 to process unfolded protein-bound Man8GlcNAc2 oligosaccharides to Man7GlcNAc2, promoting degradation in unfolded protein response.</text>
</comment>
<comment type="catalytic activity">
    <reaction evidence="12 13">
        <text>Hydrolysis of terminal, non-reducing alpha-D-mannose residues in alpha-D-mannosides.</text>
        <dbReference type="EC" id="3.2.1.24"/>
    </reaction>
</comment>
<comment type="cofactor">
    <cofactor evidence="3">
        <name>Ca(2+)</name>
        <dbReference type="ChEBI" id="CHEBI:29108"/>
    </cofactor>
</comment>
<comment type="pathway">
    <text evidence="2">Protein modification; protein glycosylation.</text>
</comment>
<comment type="subunit">
    <text evidence="12 13">Interacts with PDI1.</text>
</comment>
<comment type="interaction">
    <interactant intactId="EBI-24256">
        <id>P38888</id>
    </interactant>
    <interactant intactId="EBI-13012">
        <id>P17967</id>
        <label>PDI1</label>
    </interactant>
    <organismsDiffer>false</organismsDiffer>
    <experiments>5</experiments>
</comment>
<comment type="subcellular location">
    <subcellularLocation>
        <location evidence="5 7">Endoplasmic reticulum lumen</location>
    </subcellularLocation>
</comment>
<comment type="miscellaneous">
    <text evidence="8">Present with 656 molecules/cell in log phase SD medium.</text>
</comment>
<comment type="similarity">
    <text evidence="14">Belongs to the glycosyl hydrolase 47 family.</text>
</comment>
<gene>
    <name type="primary">MNL1</name>
    <name type="synonym">HTM1</name>
    <name type="ordered locus">YHR204W</name>
</gene>
<protein>
    <recommendedName>
        <fullName>ER degradation-enhancing alpha-mannosidase-like protein 1</fullName>
        <ecNumber evidence="12 13">3.2.1.24</ecNumber>
    </recommendedName>
</protein>